<feature type="chain" id="PRO_1000053949" description="Uridylate kinase">
    <location>
        <begin position="1"/>
        <end position="225"/>
    </location>
</feature>
<feature type="binding site" evidence="1">
    <location>
        <begin position="9"/>
        <end position="10"/>
    </location>
    <ligand>
        <name>ATP</name>
        <dbReference type="ChEBI" id="CHEBI:30616"/>
    </ligand>
</feature>
<feature type="binding site" evidence="1">
    <location>
        <position position="46"/>
    </location>
    <ligand>
        <name>UMP</name>
        <dbReference type="ChEBI" id="CHEBI:57865"/>
    </ligand>
</feature>
<feature type="binding site" evidence="1">
    <location>
        <position position="47"/>
    </location>
    <ligand>
        <name>ATP</name>
        <dbReference type="ChEBI" id="CHEBI:30616"/>
    </ligand>
</feature>
<feature type="binding site" evidence="1">
    <location>
        <position position="51"/>
    </location>
    <ligand>
        <name>ATP</name>
        <dbReference type="ChEBI" id="CHEBI:30616"/>
    </ligand>
</feature>
<feature type="binding site" evidence="1">
    <location>
        <position position="67"/>
    </location>
    <ligand>
        <name>UMP</name>
        <dbReference type="ChEBI" id="CHEBI:57865"/>
    </ligand>
</feature>
<feature type="binding site" evidence="1">
    <location>
        <begin position="115"/>
        <end position="121"/>
    </location>
    <ligand>
        <name>UMP</name>
        <dbReference type="ChEBI" id="CHEBI:57865"/>
    </ligand>
</feature>
<feature type="binding site" evidence="1">
    <location>
        <position position="141"/>
    </location>
    <ligand>
        <name>ATP</name>
        <dbReference type="ChEBI" id="CHEBI:30616"/>
    </ligand>
</feature>
<feature type="binding site" evidence="1">
    <location>
        <position position="142"/>
    </location>
    <ligand>
        <name>ATP</name>
        <dbReference type="ChEBI" id="CHEBI:30616"/>
    </ligand>
</feature>
<feature type="binding site" evidence="1">
    <location>
        <position position="147"/>
    </location>
    <ligand>
        <name>ATP</name>
        <dbReference type="ChEBI" id="CHEBI:30616"/>
    </ligand>
</feature>
<feature type="binding site" evidence="1">
    <location>
        <position position="150"/>
    </location>
    <ligand>
        <name>ATP</name>
        <dbReference type="ChEBI" id="CHEBI:30616"/>
    </ligand>
</feature>
<dbReference type="EC" id="2.7.4.22" evidence="1"/>
<dbReference type="EMBL" id="CP000743">
    <property type="protein sequence ID" value="ABR56327.1"/>
    <property type="molecule type" value="Genomic_DNA"/>
</dbReference>
<dbReference type="RefSeq" id="WP_011973459.1">
    <property type="nucleotide sequence ID" value="NC_009635.1"/>
</dbReference>
<dbReference type="SMR" id="A6UV05"/>
<dbReference type="STRING" id="419665.Maeo_0744"/>
<dbReference type="GeneID" id="5327351"/>
<dbReference type="GeneID" id="75305820"/>
<dbReference type="KEGG" id="mae:Maeo_0744"/>
<dbReference type="eggNOG" id="arCOG00858">
    <property type="taxonomic scope" value="Archaea"/>
</dbReference>
<dbReference type="HOGENOM" id="CLU_079546_0_0_2"/>
<dbReference type="OrthoDB" id="372251at2157"/>
<dbReference type="UniPathway" id="UPA00159">
    <property type="reaction ID" value="UER00275"/>
</dbReference>
<dbReference type="Proteomes" id="UP000001106">
    <property type="component" value="Chromosome"/>
</dbReference>
<dbReference type="GO" id="GO:0005737">
    <property type="term" value="C:cytoplasm"/>
    <property type="evidence" value="ECO:0007669"/>
    <property type="project" value="UniProtKB-SubCell"/>
</dbReference>
<dbReference type="GO" id="GO:0005524">
    <property type="term" value="F:ATP binding"/>
    <property type="evidence" value="ECO:0007669"/>
    <property type="project" value="UniProtKB-KW"/>
</dbReference>
<dbReference type="GO" id="GO:0033862">
    <property type="term" value="F:UMP kinase activity"/>
    <property type="evidence" value="ECO:0007669"/>
    <property type="project" value="UniProtKB-EC"/>
</dbReference>
<dbReference type="GO" id="GO:0044210">
    <property type="term" value="P:'de novo' CTP biosynthetic process"/>
    <property type="evidence" value="ECO:0007669"/>
    <property type="project" value="UniProtKB-UniRule"/>
</dbReference>
<dbReference type="GO" id="GO:0006225">
    <property type="term" value="P:UDP biosynthetic process"/>
    <property type="evidence" value="ECO:0007669"/>
    <property type="project" value="TreeGrafter"/>
</dbReference>
<dbReference type="CDD" id="cd04253">
    <property type="entry name" value="AAK_UMPK-PyrH-Pf"/>
    <property type="match status" value="1"/>
</dbReference>
<dbReference type="Gene3D" id="3.40.1160.10">
    <property type="entry name" value="Acetylglutamate kinase-like"/>
    <property type="match status" value="1"/>
</dbReference>
<dbReference type="HAMAP" id="MF_01220_A">
    <property type="entry name" value="PyrH_A"/>
    <property type="match status" value="1"/>
</dbReference>
<dbReference type="InterPro" id="IPR036393">
    <property type="entry name" value="AceGlu_kinase-like_sf"/>
</dbReference>
<dbReference type="InterPro" id="IPR001048">
    <property type="entry name" value="Asp/Glu/Uridylate_kinase"/>
</dbReference>
<dbReference type="InterPro" id="IPR011817">
    <property type="entry name" value="Uridylate_kinase"/>
</dbReference>
<dbReference type="InterPro" id="IPR011818">
    <property type="entry name" value="Uridylate_kinase_arch/spir"/>
</dbReference>
<dbReference type="NCBIfam" id="TIGR02076">
    <property type="entry name" value="pyrH_arch"/>
    <property type="match status" value="1"/>
</dbReference>
<dbReference type="PANTHER" id="PTHR42833">
    <property type="entry name" value="URIDYLATE KINASE"/>
    <property type="match status" value="1"/>
</dbReference>
<dbReference type="PANTHER" id="PTHR42833:SF4">
    <property type="entry name" value="URIDYLATE KINASE PUMPKIN, CHLOROPLASTIC"/>
    <property type="match status" value="1"/>
</dbReference>
<dbReference type="Pfam" id="PF00696">
    <property type="entry name" value="AA_kinase"/>
    <property type="match status" value="1"/>
</dbReference>
<dbReference type="PIRSF" id="PIRSF005650">
    <property type="entry name" value="Uridylate_kin"/>
    <property type="match status" value="1"/>
</dbReference>
<dbReference type="SUPFAM" id="SSF53633">
    <property type="entry name" value="Carbamate kinase-like"/>
    <property type="match status" value="1"/>
</dbReference>
<evidence type="ECO:0000255" key="1">
    <source>
        <dbReference type="HAMAP-Rule" id="MF_01220"/>
    </source>
</evidence>
<reference key="1">
    <citation type="submission" date="2007-06" db="EMBL/GenBank/DDBJ databases">
        <title>Complete sequence of Methanococcus aeolicus Nankai-3.</title>
        <authorList>
            <consortium name="US DOE Joint Genome Institute"/>
            <person name="Copeland A."/>
            <person name="Lucas S."/>
            <person name="Lapidus A."/>
            <person name="Barry K."/>
            <person name="Glavina del Rio T."/>
            <person name="Dalin E."/>
            <person name="Tice H."/>
            <person name="Pitluck S."/>
            <person name="Chain P."/>
            <person name="Malfatti S."/>
            <person name="Shin M."/>
            <person name="Vergez L."/>
            <person name="Schmutz J."/>
            <person name="Larimer F."/>
            <person name="Land M."/>
            <person name="Hauser L."/>
            <person name="Kyrpides N."/>
            <person name="Lykidis A."/>
            <person name="Sieprawska-Lupa M."/>
            <person name="Whitman W.B."/>
            <person name="Richardson P."/>
        </authorList>
    </citation>
    <scope>NUCLEOTIDE SEQUENCE [LARGE SCALE GENOMIC DNA]</scope>
    <source>
        <strain>ATCC BAA-1280 / DSM 17508 / OCM 812 / Nankai-3</strain>
    </source>
</reference>
<sequence>MKIVFALGGSVLMPKEGASVDKIKEYADVFKKMKDENNEICIVVGGGNTARTYISVAREFANESFCDEIGILATRMNSMLLISALDNYAVKKVPENFKDAEIILNLNKIVVMGGTHPAHTTDAVAASLAEYIDADMLVVATNVDGVYDKDPRKHADAKKIKQLTTKELLNITGSASIEAGSSTIIDPLASKIIDRAKLKTIVIEGAPEEILKILNNTHSGTIINP</sequence>
<comment type="function">
    <text evidence="1">Catalyzes the reversible phosphorylation of UMP to UDP.</text>
</comment>
<comment type="catalytic activity">
    <reaction evidence="1">
        <text>UMP + ATP = UDP + ADP</text>
        <dbReference type="Rhea" id="RHEA:24400"/>
        <dbReference type="ChEBI" id="CHEBI:30616"/>
        <dbReference type="ChEBI" id="CHEBI:57865"/>
        <dbReference type="ChEBI" id="CHEBI:58223"/>
        <dbReference type="ChEBI" id="CHEBI:456216"/>
        <dbReference type="EC" id="2.7.4.22"/>
    </reaction>
</comment>
<comment type="activity regulation">
    <text evidence="1">Inhibited by UTP.</text>
</comment>
<comment type="pathway">
    <text evidence="1">Pyrimidine metabolism; CTP biosynthesis via de novo pathway; UDP from UMP (UMPK route): step 1/1.</text>
</comment>
<comment type="subunit">
    <text evidence="1">Homohexamer.</text>
</comment>
<comment type="subcellular location">
    <subcellularLocation>
        <location evidence="1">Cytoplasm</location>
    </subcellularLocation>
</comment>
<comment type="similarity">
    <text evidence="1">Belongs to the UMP kinase family.</text>
</comment>
<proteinExistence type="inferred from homology"/>
<organism>
    <name type="scientific">Methanococcus aeolicus (strain ATCC BAA-1280 / DSM 17508 / OCM 812 / Nankai-3)</name>
    <dbReference type="NCBI Taxonomy" id="419665"/>
    <lineage>
        <taxon>Archaea</taxon>
        <taxon>Methanobacteriati</taxon>
        <taxon>Methanobacteriota</taxon>
        <taxon>Methanomada group</taxon>
        <taxon>Methanococci</taxon>
        <taxon>Methanococcales</taxon>
        <taxon>Methanococcaceae</taxon>
        <taxon>Methanococcus</taxon>
    </lineage>
</organism>
<keyword id="KW-0067">ATP-binding</keyword>
<keyword id="KW-0963">Cytoplasm</keyword>
<keyword id="KW-0418">Kinase</keyword>
<keyword id="KW-0547">Nucleotide-binding</keyword>
<keyword id="KW-0665">Pyrimidine biosynthesis</keyword>
<keyword id="KW-0808">Transferase</keyword>
<protein>
    <recommendedName>
        <fullName evidence="1">Uridylate kinase</fullName>
        <shortName evidence="1">UK</shortName>
        <ecNumber evidence="1">2.7.4.22</ecNumber>
    </recommendedName>
    <alternativeName>
        <fullName evidence="1">Uridine monophosphate kinase</fullName>
        <shortName evidence="1">UMP kinase</shortName>
        <shortName evidence="1">UMPK</shortName>
    </alternativeName>
</protein>
<name>PYRH_META3</name>
<gene>
    <name evidence="1" type="primary">pyrH</name>
    <name type="ordered locus">Maeo_0744</name>
</gene>
<accession>A6UV05</accession>